<comment type="function">
    <text evidence="2">As the regulatory component of the serine/threonine-protein phosphatase 2A (PP2A) holoenzyme, modulates substrate specificity, subcellular localization, and responsiveness to phosphorylation. The phosphorylated form mediates the interaction between PP2A and AKT1, leading to AKT1 dephosphorylation.</text>
</comment>
<comment type="subunit">
    <text evidence="2">Component of the serine/threonine-protein phosphatase 2A complex (PP2A). This complex consists of a common heterodimeric core enzyme, composed of a 36 kDa catalytic subunit (subunit C) and a 65 kDa constant scaffold subunit (PR65 or subunit A), that associates with a variety of regulatory subunits. Proteins that associate with the core dimer include three families of regulatory subunits B (the R2/B/PR55/B55, R3/B''/PR72/PR130/PR59 and R5/B'/B56 families), the 48 kDa variable regulatory subunit, viral proteins, and cell signaling molecules. Interacts with SGO1. Interacts with AKT1.</text>
</comment>
<comment type="subcellular location">
    <subcellularLocation>
        <location evidence="1">Nucleus</location>
    </subcellularLocation>
</comment>
<comment type="tissue specificity">
    <text>Highly expressed in brain.</text>
</comment>
<comment type="similarity">
    <text evidence="4">Belongs to the phosphatase 2A regulatory subunit B56 family.</text>
</comment>
<comment type="caution">
    <text evidence="4">Nomenclature used in PubMed:8576224 refers to PP2A B subunit B' alpha isoform, which is cited as PP2A B subunit beta-PR61 isoform in later publications.</text>
</comment>
<proteinExistence type="evidence at transcript level"/>
<keyword id="KW-0539">Nucleus</keyword>
<keyword id="KW-0597">Phosphoprotein</keyword>
<keyword id="KW-1185">Reference proteome</keyword>
<sequence length="500" mass="57709">METKLPPASTPTSPSSPGLSPVPPADKVDGFSRRSLRRARPRRSHSSSQFRYQSNQQELTPLPLLKDVPASELHDLLSRKLAQCGVMFDFLDCVADLKGKEVKRAALNELVECVGSTRGVLIEPVYPDIIRMISVNIFRTLPPSENPEFDPEEDEPNLEPSWPHLQLVYEFFLRFLESPDFQPSVAKRYVDQKFVLMLLELFDSEDPREREYLKTILHRVYGKFLGLRAYIRKQCNHIFLRFIYEFEHFNGVAELLEILGSIINGFALPLKTEHKQFLVRVLIPLHSVKSLSVFHAQLAYCVVQFLEKDATLTEHVIRGLLKYWPKTCTQKEVMFLGEVEEILDVIEPSQFVKIQEPLFKQVARCVSSPHFQVAERALYFWNNEYILSLIEDNCHTVLPAVFGTLYQVSKEHWNQTIVSLIYNVLKTFMEMNGKLFDELTASYKLEKQQEQQKARERQELWQGLEELRLRRLQGTQGTQGAREAPLQRFVPQVAATGGQS</sequence>
<name>2A5B_RABIT</name>
<gene>
    <name type="primary">PPP2R5B</name>
</gene>
<evidence type="ECO:0000250" key="1"/>
<evidence type="ECO:0000250" key="2">
    <source>
        <dbReference type="UniProtKB" id="Q15173"/>
    </source>
</evidence>
<evidence type="ECO:0000256" key="3">
    <source>
        <dbReference type="SAM" id="MobiDB-lite"/>
    </source>
</evidence>
<evidence type="ECO:0000305" key="4"/>
<accession>Q28647</accession>
<reference key="1">
    <citation type="journal article" date="1996" name="J. Biol. Chem.">
        <title>High complexity in the expression of the B' subunit of protein phosphatase 2A0. Evidence for the existence of at least seven novel isoforms.</title>
        <authorList>
            <person name="Csortos C."/>
            <person name="Zolnierowicz S."/>
            <person name="Bako E."/>
            <person name="Durbin S.D."/>
            <person name="Depaoli-Roach A.A."/>
        </authorList>
    </citation>
    <scope>NUCLEOTIDE SEQUENCE [MRNA]</scope>
    <source>
        <strain>New Zealand</strain>
    </source>
</reference>
<feature type="chain" id="PRO_0000071451" description="Serine/threonine-protein phosphatase 2A 56 kDa regulatory subunit beta isoform">
    <location>
        <begin position="1"/>
        <end position="500"/>
    </location>
</feature>
<feature type="region of interest" description="Disordered" evidence="3">
    <location>
        <begin position="1"/>
        <end position="55"/>
    </location>
</feature>
<feature type="region of interest" description="Disordered" evidence="3">
    <location>
        <begin position="474"/>
        <end position="500"/>
    </location>
</feature>
<feature type="compositionally biased region" description="Low complexity" evidence="3">
    <location>
        <begin position="1"/>
        <end position="19"/>
    </location>
</feature>
<feature type="compositionally biased region" description="Basic residues" evidence="3">
    <location>
        <begin position="34"/>
        <end position="45"/>
    </location>
</feature>
<feature type="modified residue" description="Phosphoserine; by CLK2" evidence="2">
    <location>
        <position position="32"/>
    </location>
</feature>
<feature type="modified residue" description="Phosphoserine; by CLK2" evidence="2">
    <location>
        <position position="35"/>
    </location>
</feature>
<feature type="modified residue" description="Phosphoserine; by CLK2" evidence="2">
    <location>
        <position position="44"/>
    </location>
</feature>
<feature type="modified residue" description="Phosphoserine; by CLK2" evidence="2">
    <location>
        <position position="46"/>
    </location>
</feature>
<feature type="modified residue" description="Phosphoserine; by CLK2" evidence="2">
    <location>
        <position position="47"/>
    </location>
</feature>
<feature type="modified residue" description="Phosphoserine; by CLK2" evidence="2">
    <location>
        <position position="48"/>
    </location>
</feature>
<dbReference type="EMBL" id="U37769">
    <property type="protein sequence ID" value="AAC48527.1"/>
    <property type="molecule type" value="mRNA"/>
</dbReference>
<dbReference type="RefSeq" id="NP_001075832.1">
    <property type="nucleotide sequence ID" value="NM_001082363.1"/>
</dbReference>
<dbReference type="SMR" id="Q28647"/>
<dbReference type="FunCoup" id="Q28647">
    <property type="interactions" value="243"/>
</dbReference>
<dbReference type="STRING" id="9986.ENSOCUP00000021664"/>
<dbReference type="PaxDb" id="9986-ENSOCUP00000021664"/>
<dbReference type="GeneID" id="100009215"/>
<dbReference type="KEGG" id="ocu:100009215"/>
<dbReference type="CTD" id="5526"/>
<dbReference type="eggNOG" id="KOG2085">
    <property type="taxonomic scope" value="Eukaryota"/>
</dbReference>
<dbReference type="InParanoid" id="Q28647"/>
<dbReference type="OrthoDB" id="10264446at2759"/>
<dbReference type="Proteomes" id="UP000001811">
    <property type="component" value="Unplaced"/>
</dbReference>
<dbReference type="GO" id="GO:0005829">
    <property type="term" value="C:cytosol"/>
    <property type="evidence" value="ECO:0007669"/>
    <property type="project" value="TreeGrafter"/>
</dbReference>
<dbReference type="GO" id="GO:0005634">
    <property type="term" value="C:nucleus"/>
    <property type="evidence" value="ECO:0007669"/>
    <property type="project" value="UniProtKB-SubCell"/>
</dbReference>
<dbReference type="GO" id="GO:0000159">
    <property type="term" value="C:protein phosphatase type 2A complex"/>
    <property type="evidence" value="ECO:0007669"/>
    <property type="project" value="InterPro"/>
</dbReference>
<dbReference type="GO" id="GO:0072542">
    <property type="term" value="F:protein phosphatase activator activity"/>
    <property type="evidence" value="ECO:0007669"/>
    <property type="project" value="TreeGrafter"/>
</dbReference>
<dbReference type="GO" id="GO:0007165">
    <property type="term" value="P:signal transduction"/>
    <property type="evidence" value="ECO:0007669"/>
    <property type="project" value="InterPro"/>
</dbReference>
<dbReference type="FunFam" id="1.25.10.10:FF:000010">
    <property type="entry name" value="Serine/threonine-protein phosphatase 2A 56 kDa regulatory subunit"/>
    <property type="match status" value="1"/>
</dbReference>
<dbReference type="Gene3D" id="1.25.10.10">
    <property type="entry name" value="Leucine-rich Repeat Variant"/>
    <property type="match status" value="1"/>
</dbReference>
<dbReference type="InterPro" id="IPR011989">
    <property type="entry name" value="ARM-like"/>
</dbReference>
<dbReference type="InterPro" id="IPR016024">
    <property type="entry name" value="ARM-type_fold"/>
</dbReference>
<dbReference type="InterPro" id="IPR002554">
    <property type="entry name" value="PP2A_B56"/>
</dbReference>
<dbReference type="PANTHER" id="PTHR10257">
    <property type="entry name" value="SERINE/THREONINE PROTEIN PHOSPHATASE 2A PP2A REGULATORY SUBUNIT B"/>
    <property type="match status" value="1"/>
</dbReference>
<dbReference type="PANTHER" id="PTHR10257:SF4">
    <property type="entry name" value="SERINE_THREONINE-PROTEIN PHOSPHATASE 2A 56 KDA REGULATORY SUBUNIT BETA ISOFORM"/>
    <property type="match status" value="1"/>
</dbReference>
<dbReference type="Pfam" id="PF01603">
    <property type="entry name" value="B56"/>
    <property type="match status" value="1"/>
</dbReference>
<dbReference type="PIRSF" id="PIRSF028043">
    <property type="entry name" value="PP2A_B56"/>
    <property type="match status" value="1"/>
</dbReference>
<dbReference type="SUPFAM" id="SSF48371">
    <property type="entry name" value="ARM repeat"/>
    <property type="match status" value="1"/>
</dbReference>
<protein>
    <recommendedName>
        <fullName>Serine/threonine-protein phosphatase 2A 56 kDa regulatory subunit beta isoform</fullName>
    </recommendedName>
    <alternativeName>
        <fullName>PP2A B subunit isoform B'-alpha</fullName>
    </alternativeName>
    <alternativeName>
        <fullName>PP2A B subunit isoform B'-beta</fullName>
    </alternativeName>
    <alternativeName>
        <fullName>PP2A B subunit isoform B56-beta</fullName>
    </alternativeName>
    <alternativeName>
        <fullName>PP2A B subunit isoform PR61-beta</fullName>
    </alternativeName>
    <alternativeName>
        <fullName>PP2A B subunit isoform R5-beta</fullName>
    </alternativeName>
</protein>
<organism>
    <name type="scientific">Oryctolagus cuniculus</name>
    <name type="common">Rabbit</name>
    <dbReference type="NCBI Taxonomy" id="9986"/>
    <lineage>
        <taxon>Eukaryota</taxon>
        <taxon>Metazoa</taxon>
        <taxon>Chordata</taxon>
        <taxon>Craniata</taxon>
        <taxon>Vertebrata</taxon>
        <taxon>Euteleostomi</taxon>
        <taxon>Mammalia</taxon>
        <taxon>Eutheria</taxon>
        <taxon>Euarchontoglires</taxon>
        <taxon>Glires</taxon>
        <taxon>Lagomorpha</taxon>
        <taxon>Leporidae</taxon>
        <taxon>Oryctolagus</taxon>
    </lineage>
</organism>